<organism>
    <name type="scientific">Azoarcus sp. (strain BH72)</name>
    <dbReference type="NCBI Taxonomy" id="418699"/>
    <lineage>
        <taxon>Bacteria</taxon>
        <taxon>Pseudomonadati</taxon>
        <taxon>Pseudomonadota</taxon>
        <taxon>Betaproteobacteria</taxon>
        <taxon>Rhodocyclales</taxon>
        <taxon>Zoogloeaceae</taxon>
        <taxon>Azoarcus</taxon>
    </lineage>
</organism>
<gene>
    <name evidence="1" type="primary">mraY</name>
    <name type="ordered locus">azo0881</name>
</gene>
<comment type="function">
    <text evidence="1">Catalyzes the initial step of the lipid cycle reactions in the biosynthesis of the cell wall peptidoglycan: transfers peptidoglycan precursor phospho-MurNAc-pentapeptide from UDP-MurNAc-pentapeptide onto the lipid carrier undecaprenyl phosphate, yielding undecaprenyl-pyrophosphoryl-MurNAc-pentapeptide, known as lipid I.</text>
</comment>
<comment type="catalytic activity">
    <reaction evidence="1">
        <text>UDP-N-acetyl-alpha-D-muramoyl-L-alanyl-gamma-D-glutamyl-meso-2,6-diaminopimeloyl-D-alanyl-D-alanine + di-trans,octa-cis-undecaprenyl phosphate = di-trans,octa-cis-undecaprenyl diphospho-N-acetyl-alpha-D-muramoyl-L-alanyl-D-glutamyl-meso-2,6-diaminopimeloyl-D-alanyl-D-alanine + UMP</text>
        <dbReference type="Rhea" id="RHEA:28386"/>
        <dbReference type="ChEBI" id="CHEBI:57865"/>
        <dbReference type="ChEBI" id="CHEBI:60392"/>
        <dbReference type="ChEBI" id="CHEBI:61386"/>
        <dbReference type="ChEBI" id="CHEBI:61387"/>
        <dbReference type="EC" id="2.7.8.13"/>
    </reaction>
</comment>
<comment type="cofactor">
    <cofactor evidence="1">
        <name>Mg(2+)</name>
        <dbReference type="ChEBI" id="CHEBI:18420"/>
    </cofactor>
</comment>
<comment type="pathway">
    <text evidence="1">Cell wall biogenesis; peptidoglycan biosynthesis.</text>
</comment>
<comment type="subcellular location">
    <subcellularLocation>
        <location evidence="1">Cell inner membrane</location>
        <topology evidence="1">Multi-pass membrane protein</topology>
    </subcellularLocation>
</comment>
<comment type="similarity">
    <text evidence="1">Belongs to the glycosyltransferase 4 family. MraY subfamily.</text>
</comment>
<protein>
    <recommendedName>
        <fullName evidence="1">Phospho-N-acetylmuramoyl-pentapeptide-transferase</fullName>
        <ecNumber evidence="1">2.7.8.13</ecNumber>
    </recommendedName>
    <alternativeName>
        <fullName evidence="1">UDP-MurNAc-pentapeptide phosphotransferase</fullName>
    </alternativeName>
</protein>
<reference key="1">
    <citation type="journal article" date="2006" name="Nat. Biotechnol.">
        <title>Complete genome of the mutualistic, N2-fixing grass endophyte Azoarcus sp. strain BH72.</title>
        <authorList>
            <person name="Krause A."/>
            <person name="Ramakumar A."/>
            <person name="Bartels D."/>
            <person name="Battistoni F."/>
            <person name="Bekel T."/>
            <person name="Boch J."/>
            <person name="Boehm M."/>
            <person name="Friedrich F."/>
            <person name="Hurek T."/>
            <person name="Krause L."/>
            <person name="Linke B."/>
            <person name="McHardy A.C."/>
            <person name="Sarkar A."/>
            <person name="Schneiker S."/>
            <person name="Syed A.A."/>
            <person name="Thauer R."/>
            <person name="Vorhoelter F.-J."/>
            <person name="Weidner S."/>
            <person name="Puehler A."/>
            <person name="Reinhold-Hurek B."/>
            <person name="Kaiser O."/>
            <person name="Goesmann A."/>
        </authorList>
    </citation>
    <scope>NUCLEOTIDE SEQUENCE [LARGE SCALE GENOMIC DNA]</scope>
    <source>
        <strain>BH72</strain>
    </source>
</reference>
<evidence type="ECO:0000255" key="1">
    <source>
        <dbReference type="HAMAP-Rule" id="MF_00038"/>
    </source>
</evidence>
<name>MRAY_AZOSB</name>
<dbReference type="EC" id="2.7.8.13" evidence="1"/>
<dbReference type="EMBL" id="AM406670">
    <property type="protein sequence ID" value="CAL93498.1"/>
    <property type="molecule type" value="Genomic_DNA"/>
</dbReference>
<dbReference type="RefSeq" id="WP_011764615.1">
    <property type="nucleotide sequence ID" value="NC_008702.1"/>
</dbReference>
<dbReference type="SMR" id="A1K3U3"/>
<dbReference type="STRING" id="62928.azo0881"/>
<dbReference type="KEGG" id="aoa:dqs_0952"/>
<dbReference type="KEGG" id="azo:azo0881"/>
<dbReference type="eggNOG" id="COG0472">
    <property type="taxonomic scope" value="Bacteria"/>
</dbReference>
<dbReference type="HOGENOM" id="CLU_023982_0_0_4"/>
<dbReference type="OrthoDB" id="9805475at2"/>
<dbReference type="UniPathway" id="UPA00219"/>
<dbReference type="Proteomes" id="UP000002588">
    <property type="component" value="Chromosome"/>
</dbReference>
<dbReference type="GO" id="GO:0005886">
    <property type="term" value="C:plasma membrane"/>
    <property type="evidence" value="ECO:0007669"/>
    <property type="project" value="UniProtKB-SubCell"/>
</dbReference>
<dbReference type="GO" id="GO:0046872">
    <property type="term" value="F:metal ion binding"/>
    <property type="evidence" value="ECO:0007669"/>
    <property type="project" value="UniProtKB-KW"/>
</dbReference>
<dbReference type="GO" id="GO:0008963">
    <property type="term" value="F:phospho-N-acetylmuramoyl-pentapeptide-transferase activity"/>
    <property type="evidence" value="ECO:0007669"/>
    <property type="project" value="UniProtKB-UniRule"/>
</dbReference>
<dbReference type="GO" id="GO:0051992">
    <property type="term" value="F:UDP-N-acetylmuramoyl-L-alanyl-D-glutamyl-meso-2,6-diaminopimelyl-D-alanyl-D-alanine:undecaprenyl-phosphate transferase activity"/>
    <property type="evidence" value="ECO:0007669"/>
    <property type="project" value="RHEA"/>
</dbReference>
<dbReference type="GO" id="GO:0051301">
    <property type="term" value="P:cell division"/>
    <property type="evidence" value="ECO:0007669"/>
    <property type="project" value="UniProtKB-KW"/>
</dbReference>
<dbReference type="GO" id="GO:0071555">
    <property type="term" value="P:cell wall organization"/>
    <property type="evidence" value="ECO:0007669"/>
    <property type="project" value="UniProtKB-KW"/>
</dbReference>
<dbReference type="GO" id="GO:0009252">
    <property type="term" value="P:peptidoglycan biosynthetic process"/>
    <property type="evidence" value="ECO:0007669"/>
    <property type="project" value="UniProtKB-UniRule"/>
</dbReference>
<dbReference type="GO" id="GO:0008360">
    <property type="term" value="P:regulation of cell shape"/>
    <property type="evidence" value="ECO:0007669"/>
    <property type="project" value="UniProtKB-KW"/>
</dbReference>
<dbReference type="CDD" id="cd06852">
    <property type="entry name" value="GT_MraY"/>
    <property type="match status" value="1"/>
</dbReference>
<dbReference type="HAMAP" id="MF_00038">
    <property type="entry name" value="MraY"/>
    <property type="match status" value="1"/>
</dbReference>
<dbReference type="InterPro" id="IPR000715">
    <property type="entry name" value="Glycosyl_transferase_4"/>
</dbReference>
<dbReference type="InterPro" id="IPR003524">
    <property type="entry name" value="PNAcMuramoyl-5peptid_Trfase"/>
</dbReference>
<dbReference type="InterPro" id="IPR018480">
    <property type="entry name" value="PNAcMuramoyl-5peptid_Trfase_CS"/>
</dbReference>
<dbReference type="NCBIfam" id="TIGR00445">
    <property type="entry name" value="mraY"/>
    <property type="match status" value="1"/>
</dbReference>
<dbReference type="PANTHER" id="PTHR22926">
    <property type="entry name" value="PHOSPHO-N-ACETYLMURAMOYL-PENTAPEPTIDE-TRANSFERASE"/>
    <property type="match status" value="1"/>
</dbReference>
<dbReference type="PANTHER" id="PTHR22926:SF5">
    <property type="entry name" value="PHOSPHO-N-ACETYLMURAMOYL-PENTAPEPTIDE-TRANSFERASE HOMOLOG"/>
    <property type="match status" value="1"/>
</dbReference>
<dbReference type="Pfam" id="PF00953">
    <property type="entry name" value="Glycos_transf_4"/>
    <property type="match status" value="1"/>
</dbReference>
<dbReference type="Pfam" id="PF10555">
    <property type="entry name" value="MraY_sig1"/>
    <property type="match status" value="1"/>
</dbReference>
<dbReference type="PROSITE" id="PS01347">
    <property type="entry name" value="MRAY_1"/>
    <property type="match status" value="1"/>
</dbReference>
<dbReference type="PROSITE" id="PS01348">
    <property type="entry name" value="MRAY_2"/>
    <property type="match status" value="1"/>
</dbReference>
<sequence length="362" mass="38801">MLLELALWLGQDIRGFNVFGYITLRTVLAALTALAISLTAGPGVIRWLAAKKIGQAVRDDGPKSHLTKAGTPTMGGALILIAIGITILLWGDLRNAYVWVTLLVTLGFGAVGWVDDWRKVVHRDPKGLASRWKYFWTSAIALGASIFLGLSATTPAETELIVPFFKAVAYPLGVYGFIALTYFVINGTSHAVNLTDGLDGLAIMPTVMVAGALAIFAYVAGHAGFSKYLGVPYIAGAGELAVFCGAICGAGLGFLWFNAYPAEVFMGDVGALALGAALGTIAVVVRQEIVLFIMGGLFVAETLSVMVQVLYFKASGGKRIFRMAPLHHHYELSGWKETQVVVRFWIITLMLVLFGLSTLKLR</sequence>
<proteinExistence type="inferred from homology"/>
<feature type="chain" id="PRO_1000002936" description="Phospho-N-acetylmuramoyl-pentapeptide-transferase">
    <location>
        <begin position="1"/>
        <end position="362"/>
    </location>
</feature>
<feature type="transmembrane region" description="Helical" evidence="1">
    <location>
        <begin position="18"/>
        <end position="38"/>
    </location>
</feature>
<feature type="transmembrane region" description="Helical" evidence="1">
    <location>
        <begin position="73"/>
        <end position="93"/>
    </location>
</feature>
<feature type="transmembrane region" description="Helical" evidence="1">
    <location>
        <begin position="97"/>
        <end position="117"/>
    </location>
</feature>
<feature type="transmembrane region" description="Helical" evidence="1">
    <location>
        <begin position="134"/>
        <end position="154"/>
    </location>
</feature>
<feature type="transmembrane region" description="Helical" evidence="1">
    <location>
        <begin position="160"/>
        <end position="180"/>
    </location>
</feature>
<feature type="transmembrane region" description="Helical" evidence="1">
    <location>
        <begin position="200"/>
        <end position="220"/>
    </location>
</feature>
<feature type="transmembrane region" description="Helical" evidence="1">
    <location>
        <begin position="237"/>
        <end position="257"/>
    </location>
</feature>
<feature type="transmembrane region" description="Helical" evidence="1">
    <location>
        <begin position="264"/>
        <end position="284"/>
    </location>
</feature>
<feature type="transmembrane region" description="Helical" evidence="1">
    <location>
        <begin position="289"/>
        <end position="309"/>
    </location>
</feature>
<feature type="transmembrane region" description="Helical" evidence="1">
    <location>
        <begin position="339"/>
        <end position="359"/>
    </location>
</feature>
<keyword id="KW-0131">Cell cycle</keyword>
<keyword id="KW-0132">Cell division</keyword>
<keyword id="KW-0997">Cell inner membrane</keyword>
<keyword id="KW-1003">Cell membrane</keyword>
<keyword id="KW-0133">Cell shape</keyword>
<keyword id="KW-0961">Cell wall biogenesis/degradation</keyword>
<keyword id="KW-0460">Magnesium</keyword>
<keyword id="KW-0472">Membrane</keyword>
<keyword id="KW-0479">Metal-binding</keyword>
<keyword id="KW-0573">Peptidoglycan synthesis</keyword>
<keyword id="KW-1185">Reference proteome</keyword>
<keyword id="KW-0808">Transferase</keyword>
<keyword id="KW-0812">Transmembrane</keyword>
<keyword id="KW-1133">Transmembrane helix</keyword>
<accession>A1K3U3</accession>